<sequence>MKRAVVVFSGGQDSTTCLIQALHQYDEVHCVTFDYGQRHRAEIDVASALAASLGARAHKVLDVTLLNELAVSSLTRDSIPVPDYDPDAEGLPSTFVPGRNILFLTLASIYAYQVQAEAVITGVCETDFSGYPDCRDEFVKALNHAVALGMARDVRFETPLMWLNKAETWALADYWGKLDVIRHQTLTCYNGIQGDGCGECAACHLRANGLSQYEADKPAIMAAMKQKTGLK</sequence>
<dbReference type="EC" id="6.3.4.20" evidence="1"/>
<dbReference type="EMBL" id="CP000783">
    <property type="protein sequence ID" value="ABU78082.1"/>
    <property type="molecule type" value="Genomic_DNA"/>
</dbReference>
<dbReference type="RefSeq" id="WP_012125485.1">
    <property type="nucleotide sequence ID" value="NC_009778.1"/>
</dbReference>
<dbReference type="SMR" id="A7MFJ8"/>
<dbReference type="KEGG" id="esa:ESA_02853"/>
<dbReference type="PATRIC" id="fig|290339.8.peg.2543"/>
<dbReference type="HOGENOM" id="CLU_081854_0_0_6"/>
<dbReference type="UniPathway" id="UPA00391"/>
<dbReference type="Proteomes" id="UP000000260">
    <property type="component" value="Chromosome"/>
</dbReference>
<dbReference type="GO" id="GO:0005524">
    <property type="term" value="F:ATP binding"/>
    <property type="evidence" value="ECO:0007669"/>
    <property type="project" value="UniProtKB-UniRule"/>
</dbReference>
<dbReference type="GO" id="GO:0016879">
    <property type="term" value="F:ligase activity, forming carbon-nitrogen bonds"/>
    <property type="evidence" value="ECO:0007669"/>
    <property type="project" value="UniProtKB-UniRule"/>
</dbReference>
<dbReference type="GO" id="GO:0008270">
    <property type="term" value="F:zinc ion binding"/>
    <property type="evidence" value="ECO:0007669"/>
    <property type="project" value="UniProtKB-UniRule"/>
</dbReference>
<dbReference type="GO" id="GO:0008616">
    <property type="term" value="P:queuosine biosynthetic process"/>
    <property type="evidence" value="ECO:0007669"/>
    <property type="project" value="UniProtKB-UniRule"/>
</dbReference>
<dbReference type="CDD" id="cd01995">
    <property type="entry name" value="QueC-like"/>
    <property type="match status" value="1"/>
</dbReference>
<dbReference type="FunFam" id="3.40.50.620:FF:000017">
    <property type="entry name" value="7-cyano-7-deazaguanine synthase"/>
    <property type="match status" value="1"/>
</dbReference>
<dbReference type="Gene3D" id="3.40.50.620">
    <property type="entry name" value="HUPs"/>
    <property type="match status" value="1"/>
</dbReference>
<dbReference type="HAMAP" id="MF_01633">
    <property type="entry name" value="QueC"/>
    <property type="match status" value="1"/>
</dbReference>
<dbReference type="InterPro" id="IPR018317">
    <property type="entry name" value="QueC"/>
</dbReference>
<dbReference type="InterPro" id="IPR014729">
    <property type="entry name" value="Rossmann-like_a/b/a_fold"/>
</dbReference>
<dbReference type="NCBIfam" id="TIGR00364">
    <property type="entry name" value="7-cyano-7-deazaguanine synthase QueC"/>
    <property type="match status" value="1"/>
</dbReference>
<dbReference type="NCBIfam" id="NF008317">
    <property type="entry name" value="PRK11106.1"/>
    <property type="match status" value="1"/>
</dbReference>
<dbReference type="PANTHER" id="PTHR42914">
    <property type="entry name" value="7-CYANO-7-DEAZAGUANINE SYNTHASE"/>
    <property type="match status" value="1"/>
</dbReference>
<dbReference type="PANTHER" id="PTHR42914:SF1">
    <property type="entry name" value="7-CYANO-7-DEAZAGUANINE SYNTHASE"/>
    <property type="match status" value="1"/>
</dbReference>
<dbReference type="Pfam" id="PF06508">
    <property type="entry name" value="QueC"/>
    <property type="match status" value="1"/>
</dbReference>
<dbReference type="PIRSF" id="PIRSF006293">
    <property type="entry name" value="ExsB"/>
    <property type="match status" value="1"/>
</dbReference>
<dbReference type="SUPFAM" id="SSF52402">
    <property type="entry name" value="Adenine nucleotide alpha hydrolases-like"/>
    <property type="match status" value="1"/>
</dbReference>
<gene>
    <name evidence="1" type="primary">queC</name>
    <name type="ordered locus">ESA_02853</name>
</gene>
<feature type="chain" id="PRO_1000069769" description="7-cyano-7-deazaguanine synthase">
    <location>
        <begin position="1"/>
        <end position="231"/>
    </location>
</feature>
<feature type="binding site" evidence="1">
    <location>
        <begin position="8"/>
        <end position="18"/>
    </location>
    <ligand>
        <name>ATP</name>
        <dbReference type="ChEBI" id="CHEBI:30616"/>
    </ligand>
</feature>
<feature type="binding site" evidence="1">
    <location>
        <position position="188"/>
    </location>
    <ligand>
        <name>Zn(2+)</name>
        <dbReference type="ChEBI" id="CHEBI:29105"/>
    </ligand>
</feature>
<feature type="binding site" evidence="1">
    <location>
        <position position="197"/>
    </location>
    <ligand>
        <name>Zn(2+)</name>
        <dbReference type="ChEBI" id="CHEBI:29105"/>
    </ligand>
</feature>
<feature type="binding site" evidence="1">
    <location>
        <position position="200"/>
    </location>
    <ligand>
        <name>Zn(2+)</name>
        <dbReference type="ChEBI" id="CHEBI:29105"/>
    </ligand>
</feature>
<feature type="binding site" evidence="1">
    <location>
        <position position="203"/>
    </location>
    <ligand>
        <name>Zn(2+)</name>
        <dbReference type="ChEBI" id="CHEBI:29105"/>
    </ligand>
</feature>
<evidence type="ECO:0000255" key="1">
    <source>
        <dbReference type="HAMAP-Rule" id="MF_01633"/>
    </source>
</evidence>
<name>QUEC_CROS8</name>
<reference key="1">
    <citation type="journal article" date="2010" name="PLoS ONE">
        <title>Genome sequence of Cronobacter sakazakii BAA-894 and comparative genomic hybridization analysis with other Cronobacter species.</title>
        <authorList>
            <person name="Kucerova E."/>
            <person name="Clifton S.W."/>
            <person name="Xia X.Q."/>
            <person name="Long F."/>
            <person name="Porwollik S."/>
            <person name="Fulton L."/>
            <person name="Fronick C."/>
            <person name="Minx P."/>
            <person name="Kyung K."/>
            <person name="Warren W."/>
            <person name="Fulton R."/>
            <person name="Feng D."/>
            <person name="Wollam A."/>
            <person name="Shah N."/>
            <person name="Bhonagiri V."/>
            <person name="Nash W.E."/>
            <person name="Hallsworth-Pepin K."/>
            <person name="Wilson R.K."/>
            <person name="McClelland M."/>
            <person name="Forsythe S.J."/>
        </authorList>
    </citation>
    <scope>NUCLEOTIDE SEQUENCE [LARGE SCALE GENOMIC DNA]</scope>
    <source>
        <strain>ATCC BAA-894</strain>
    </source>
</reference>
<organism>
    <name type="scientific">Cronobacter sakazakii (strain ATCC BAA-894)</name>
    <name type="common">Enterobacter sakazakii</name>
    <dbReference type="NCBI Taxonomy" id="290339"/>
    <lineage>
        <taxon>Bacteria</taxon>
        <taxon>Pseudomonadati</taxon>
        <taxon>Pseudomonadota</taxon>
        <taxon>Gammaproteobacteria</taxon>
        <taxon>Enterobacterales</taxon>
        <taxon>Enterobacteriaceae</taxon>
        <taxon>Cronobacter</taxon>
    </lineage>
</organism>
<keyword id="KW-0067">ATP-binding</keyword>
<keyword id="KW-0436">Ligase</keyword>
<keyword id="KW-0479">Metal-binding</keyword>
<keyword id="KW-0547">Nucleotide-binding</keyword>
<keyword id="KW-0671">Queuosine biosynthesis</keyword>
<keyword id="KW-1185">Reference proteome</keyword>
<keyword id="KW-0862">Zinc</keyword>
<comment type="function">
    <text evidence="1">Catalyzes the ATP-dependent conversion of 7-carboxy-7-deazaguanine (CDG) to 7-cyano-7-deazaguanine (preQ(0)).</text>
</comment>
<comment type="catalytic activity">
    <reaction evidence="1">
        <text>7-carboxy-7-deazaguanine + NH4(+) + ATP = 7-cyano-7-deazaguanine + ADP + phosphate + H2O + H(+)</text>
        <dbReference type="Rhea" id="RHEA:27982"/>
        <dbReference type="ChEBI" id="CHEBI:15377"/>
        <dbReference type="ChEBI" id="CHEBI:15378"/>
        <dbReference type="ChEBI" id="CHEBI:28938"/>
        <dbReference type="ChEBI" id="CHEBI:30616"/>
        <dbReference type="ChEBI" id="CHEBI:43474"/>
        <dbReference type="ChEBI" id="CHEBI:45075"/>
        <dbReference type="ChEBI" id="CHEBI:61036"/>
        <dbReference type="ChEBI" id="CHEBI:456216"/>
        <dbReference type="EC" id="6.3.4.20"/>
    </reaction>
</comment>
<comment type="cofactor">
    <cofactor evidence="1">
        <name>Zn(2+)</name>
        <dbReference type="ChEBI" id="CHEBI:29105"/>
    </cofactor>
    <text evidence="1">Binds 1 zinc ion per subunit.</text>
</comment>
<comment type="pathway">
    <text evidence="1">Purine metabolism; 7-cyano-7-deazaguanine biosynthesis.</text>
</comment>
<comment type="similarity">
    <text evidence="1">Belongs to the QueC family.</text>
</comment>
<proteinExistence type="inferred from homology"/>
<accession>A7MFJ8</accession>
<protein>
    <recommendedName>
        <fullName evidence="1">7-cyano-7-deazaguanine synthase</fullName>
        <ecNumber evidence="1">6.3.4.20</ecNumber>
    </recommendedName>
    <alternativeName>
        <fullName evidence="1">7-cyano-7-carbaguanine synthase</fullName>
    </alternativeName>
    <alternativeName>
        <fullName evidence="1">PreQ(0) synthase</fullName>
    </alternativeName>
    <alternativeName>
        <fullName evidence="1">Queuosine biosynthesis protein QueC</fullName>
    </alternativeName>
</protein>